<dbReference type="EC" id="3.4.19.3" evidence="1"/>
<dbReference type="EMBL" id="CP000423">
    <property type="protein sequence ID" value="ABJ69069.1"/>
    <property type="molecule type" value="Genomic_DNA"/>
</dbReference>
<dbReference type="RefSeq" id="WP_003592791.1">
    <property type="nucleotide sequence ID" value="NC_008526.1"/>
</dbReference>
<dbReference type="RefSeq" id="YP_805511.1">
    <property type="nucleotide sequence ID" value="NC_008526.1"/>
</dbReference>
<dbReference type="SMR" id="Q03CK3"/>
<dbReference type="STRING" id="321967.LSEI_0206"/>
<dbReference type="MEROPS" id="C15.001"/>
<dbReference type="PaxDb" id="321967-LSEI_0206"/>
<dbReference type="KEGG" id="lca:LSEI_0206"/>
<dbReference type="PATRIC" id="fig|321967.11.peg.232"/>
<dbReference type="HOGENOM" id="CLU_043960_4_0_9"/>
<dbReference type="Proteomes" id="UP000001651">
    <property type="component" value="Chromosome"/>
</dbReference>
<dbReference type="GO" id="GO:0005829">
    <property type="term" value="C:cytosol"/>
    <property type="evidence" value="ECO:0007669"/>
    <property type="project" value="InterPro"/>
</dbReference>
<dbReference type="GO" id="GO:0016920">
    <property type="term" value="F:pyroglutamyl-peptidase activity"/>
    <property type="evidence" value="ECO:0007669"/>
    <property type="project" value="UniProtKB-UniRule"/>
</dbReference>
<dbReference type="GO" id="GO:0006508">
    <property type="term" value="P:proteolysis"/>
    <property type="evidence" value="ECO:0007669"/>
    <property type="project" value="UniProtKB-KW"/>
</dbReference>
<dbReference type="CDD" id="cd00501">
    <property type="entry name" value="Peptidase_C15"/>
    <property type="match status" value="1"/>
</dbReference>
<dbReference type="FunFam" id="3.40.630.20:FF:000001">
    <property type="entry name" value="Pyrrolidone-carboxylate peptidase"/>
    <property type="match status" value="1"/>
</dbReference>
<dbReference type="Gene3D" id="3.40.630.20">
    <property type="entry name" value="Peptidase C15, pyroglutamyl peptidase I-like"/>
    <property type="match status" value="1"/>
</dbReference>
<dbReference type="HAMAP" id="MF_00417">
    <property type="entry name" value="Pyrrolid_peptidase"/>
    <property type="match status" value="1"/>
</dbReference>
<dbReference type="InterPro" id="IPR000816">
    <property type="entry name" value="Peptidase_C15"/>
</dbReference>
<dbReference type="InterPro" id="IPR016125">
    <property type="entry name" value="Peptidase_C15-like"/>
</dbReference>
<dbReference type="InterPro" id="IPR036440">
    <property type="entry name" value="Peptidase_C15-like_sf"/>
</dbReference>
<dbReference type="InterPro" id="IPR029762">
    <property type="entry name" value="PGP-I_bact-type"/>
</dbReference>
<dbReference type="InterPro" id="IPR033694">
    <property type="entry name" value="PGPEP1_Cys_AS"/>
</dbReference>
<dbReference type="InterPro" id="IPR033693">
    <property type="entry name" value="PGPEP1_Glu_AS"/>
</dbReference>
<dbReference type="NCBIfam" id="NF009676">
    <property type="entry name" value="PRK13197.1"/>
    <property type="match status" value="1"/>
</dbReference>
<dbReference type="NCBIfam" id="TIGR00504">
    <property type="entry name" value="pyro_pdase"/>
    <property type="match status" value="1"/>
</dbReference>
<dbReference type="PANTHER" id="PTHR23402">
    <property type="entry name" value="PROTEASE FAMILY C15 PYROGLUTAMYL-PEPTIDASE I-RELATED"/>
    <property type="match status" value="1"/>
</dbReference>
<dbReference type="PANTHER" id="PTHR23402:SF1">
    <property type="entry name" value="PYROGLUTAMYL-PEPTIDASE I"/>
    <property type="match status" value="1"/>
</dbReference>
<dbReference type="Pfam" id="PF01470">
    <property type="entry name" value="Peptidase_C15"/>
    <property type="match status" value="1"/>
</dbReference>
<dbReference type="PIRSF" id="PIRSF015592">
    <property type="entry name" value="Prld-crbxl_pptds"/>
    <property type="match status" value="1"/>
</dbReference>
<dbReference type="PRINTS" id="PR00706">
    <property type="entry name" value="PYROGLUPTASE"/>
</dbReference>
<dbReference type="SUPFAM" id="SSF53182">
    <property type="entry name" value="Pyrrolidone carboxyl peptidase (pyroglutamate aminopeptidase)"/>
    <property type="match status" value="1"/>
</dbReference>
<dbReference type="PROSITE" id="PS01334">
    <property type="entry name" value="PYRASE_CYS"/>
    <property type="match status" value="1"/>
</dbReference>
<dbReference type="PROSITE" id="PS01333">
    <property type="entry name" value="PYRASE_GLU"/>
    <property type="match status" value="1"/>
</dbReference>
<reference key="1">
    <citation type="journal article" date="2006" name="Proc. Natl. Acad. Sci. U.S.A.">
        <title>Comparative genomics of the lactic acid bacteria.</title>
        <authorList>
            <person name="Makarova K.S."/>
            <person name="Slesarev A."/>
            <person name="Wolf Y.I."/>
            <person name="Sorokin A."/>
            <person name="Mirkin B."/>
            <person name="Koonin E.V."/>
            <person name="Pavlov A."/>
            <person name="Pavlova N."/>
            <person name="Karamychev V."/>
            <person name="Polouchine N."/>
            <person name="Shakhova V."/>
            <person name="Grigoriev I."/>
            <person name="Lou Y."/>
            <person name="Rohksar D."/>
            <person name="Lucas S."/>
            <person name="Huang K."/>
            <person name="Goodstein D.M."/>
            <person name="Hawkins T."/>
            <person name="Plengvidhya V."/>
            <person name="Welker D."/>
            <person name="Hughes J."/>
            <person name="Goh Y."/>
            <person name="Benson A."/>
            <person name="Baldwin K."/>
            <person name="Lee J.-H."/>
            <person name="Diaz-Muniz I."/>
            <person name="Dosti B."/>
            <person name="Smeianov V."/>
            <person name="Wechter W."/>
            <person name="Barabote R."/>
            <person name="Lorca G."/>
            <person name="Altermann E."/>
            <person name="Barrangou R."/>
            <person name="Ganesan B."/>
            <person name="Xie Y."/>
            <person name="Rawsthorne H."/>
            <person name="Tamir D."/>
            <person name="Parker C."/>
            <person name="Breidt F."/>
            <person name="Broadbent J.R."/>
            <person name="Hutkins R."/>
            <person name="O'Sullivan D."/>
            <person name="Steele J."/>
            <person name="Unlu G."/>
            <person name="Saier M.H. Jr."/>
            <person name="Klaenhammer T."/>
            <person name="Richardson P."/>
            <person name="Kozyavkin S."/>
            <person name="Weimer B.C."/>
            <person name="Mills D.A."/>
        </authorList>
    </citation>
    <scope>NUCLEOTIDE SEQUENCE [LARGE SCALE GENOMIC DNA]</scope>
    <source>
        <strain>ATCC 334 / BCRC 17002 / CCUG 31169 / CIP 107868 / KCTC 3260 / NRRL B-441</strain>
    </source>
</reference>
<feature type="chain" id="PRO_1000050131" description="Pyrrolidone-carboxylate peptidase">
    <location>
        <begin position="1"/>
        <end position="215"/>
    </location>
</feature>
<feature type="active site" evidence="1">
    <location>
        <position position="78"/>
    </location>
</feature>
<feature type="active site" evidence="1">
    <location>
        <position position="141"/>
    </location>
</feature>
<feature type="active site" evidence="1">
    <location>
        <position position="165"/>
    </location>
</feature>
<protein>
    <recommendedName>
        <fullName evidence="1">Pyrrolidone-carboxylate peptidase</fullName>
        <ecNumber evidence="1">3.4.19.3</ecNumber>
    </recommendedName>
    <alternativeName>
        <fullName evidence="1">5-oxoprolyl-peptidase</fullName>
    </alternativeName>
    <alternativeName>
        <fullName evidence="1">Pyroglutamyl-peptidase I</fullName>
        <shortName evidence="1">PGP-I</shortName>
        <shortName evidence="1">Pyrase</shortName>
    </alternativeName>
</protein>
<proteinExistence type="inferred from homology"/>
<evidence type="ECO:0000255" key="1">
    <source>
        <dbReference type="HAMAP-Rule" id="MF_00417"/>
    </source>
</evidence>
<comment type="function">
    <text evidence="1">Removes 5-oxoproline from various penultimate amino acid residues except L-proline.</text>
</comment>
<comment type="catalytic activity">
    <reaction evidence="1">
        <text>Release of an N-terminal pyroglutamyl group from a polypeptide, the second amino acid generally not being Pro.</text>
        <dbReference type="EC" id="3.4.19.3"/>
    </reaction>
</comment>
<comment type="subunit">
    <text evidence="1">Homotetramer.</text>
</comment>
<comment type="subcellular location">
    <subcellularLocation>
        <location evidence="1">Cytoplasm</location>
    </subcellularLocation>
</comment>
<comment type="similarity">
    <text evidence="1">Belongs to the peptidase C15 family.</text>
</comment>
<sequence>MKILVTGFDPFGDDKINPAIEAVKRLPDEIAGAQIVKLEIPTKFNVSADVVKDAIAKEKPDYVLSIGQAGGRFELTPERVAINLDDGRIQDNAGYQPLNHTIHGDGENAYFTQLPIKAMAKAIREAGVPAAVSNTAGTYVCNHIFYQVQYMRDKMFPDIKAGFMHIPFLPEQVVTRPETPALSLDDDVLGITAAIRAIVSRDGKGDIETIEGKNH</sequence>
<organism>
    <name type="scientific">Lacticaseibacillus paracasei (strain ATCC 334 / BCRC 17002 / CCUG 31169 / CIP 107868 / KCTC 3260 / NRRL B-441)</name>
    <name type="common">Lactobacillus paracasei</name>
    <dbReference type="NCBI Taxonomy" id="321967"/>
    <lineage>
        <taxon>Bacteria</taxon>
        <taxon>Bacillati</taxon>
        <taxon>Bacillota</taxon>
        <taxon>Bacilli</taxon>
        <taxon>Lactobacillales</taxon>
        <taxon>Lactobacillaceae</taxon>
        <taxon>Lacticaseibacillus</taxon>
    </lineage>
</organism>
<name>PCP_LACP3</name>
<gene>
    <name evidence="1" type="primary">pcp</name>
    <name type="ordered locus">LSEI_0206</name>
</gene>
<accession>Q03CK3</accession>
<keyword id="KW-0963">Cytoplasm</keyword>
<keyword id="KW-0378">Hydrolase</keyword>
<keyword id="KW-0645">Protease</keyword>
<keyword id="KW-1185">Reference proteome</keyword>
<keyword id="KW-0788">Thiol protease</keyword>